<comment type="function">
    <text evidence="1">Methylates ribosomal protein L11.</text>
</comment>
<comment type="catalytic activity">
    <reaction evidence="1">
        <text>L-lysyl-[protein] + 3 S-adenosyl-L-methionine = N(6),N(6),N(6)-trimethyl-L-lysyl-[protein] + 3 S-adenosyl-L-homocysteine + 3 H(+)</text>
        <dbReference type="Rhea" id="RHEA:54192"/>
        <dbReference type="Rhea" id="RHEA-COMP:9752"/>
        <dbReference type="Rhea" id="RHEA-COMP:13826"/>
        <dbReference type="ChEBI" id="CHEBI:15378"/>
        <dbReference type="ChEBI" id="CHEBI:29969"/>
        <dbReference type="ChEBI" id="CHEBI:57856"/>
        <dbReference type="ChEBI" id="CHEBI:59789"/>
        <dbReference type="ChEBI" id="CHEBI:61961"/>
    </reaction>
</comment>
<comment type="subcellular location">
    <subcellularLocation>
        <location evidence="1">Cytoplasm</location>
    </subcellularLocation>
</comment>
<comment type="similarity">
    <text evidence="1">Belongs to the methyltransferase superfamily. PrmA family.</text>
</comment>
<evidence type="ECO:0000255" key="1">
    <source>
        <dbReference type="HAMAP-Rule" id="MF_00735"/>
    </source>
</evidence>
<keyword id="KW-0963">Cytoplasm</keyword>
<keyword id="KW-0489">Methyltransferase</keyword>
<keyword id="KW-1185">Reference proteome</keyword>
<keyword id="KW-0949">S-adenosyl-L-methionine</keyword>
<keyword id="KW-0808">Transferase</keyword>
<accession>Q7NIP7</accession>
<proteinExistence type="inferred from homology"/>
<organism>
    <name type="scientific">Gloeobacter violaceus (strain ATCC 29082 / PCC 7421)</name>
    <dbReference type="NCBI Taxonomy" id="251221"/>
    <lineage>
        <taxon>Bacteria</taxon>
        <taxon>Bacillati</taxon>
        <taxon>Cyanobacteriota</taxon>
        <taxon>Cyanophyceae</taxon>
        <taxon>Gloeobacterales</taxon>
        <taxon>Gloeobacteraceae</taxon>
        <taxon>Gloeobacter</taxon>
    </lineage>
</organism>
<protein>
    <recommendedName>
        <fullName evidence="1">Ribosomal protein L11 methyltransferase</fullName>
        <shortName evidence="1">L11 Mtase</shortName>
        <ecNumber evidence="1">2.1.1.-</ecNumber>
    </recommendedName>
</protein>
<feature type="chain" id="PRO_0000192264" description="Ribosomal protein L11 methyltransferase">
    <location>
        <begin position="1"/>
        <end position="316"/>
    </location>
</feature>
<feature type="binding site" evidence="1">
    <location>
        <position position="159"/>
    </location>
    <ligand>
        <name>S-adenosyl-L-methionine</name>
        <dbReference type="ChEBI" id="CHEBI:59789"/>
    </ligand>
</feature>
<feature type="binding site" evidence="1">
    <location>
        <position position="179"/>
    </location>
    <ligand>
        <name>S-adenosyl-L-methionine</name>
        <dbReference type="ChEBI" id="CHEBI:59789"/>
    </ligand>
</feature>
<feature type="binding site" evidence="1">
    <location>
        <position position="201"/>
    </location>
    <ligand>
        <name>S-adenosyl-L-methionine</name>
        <dbReference type="ChEBI" id="CHEBI:59789"/>
    </ligand>
</feature>
<feature type="binding site" evidence="1">
    <location>
        <position position="243"/>
    </location>
    <ligand>
        <name>S-adenosyl-L-methionine</name>
        <dbReference type="ChEBI" id="CHEBI:59789"/>
    </ligand>
</feature>
<sequence>MYPAITPLQAGLQWWAVAGRQGVAELWQVQVETAADGADGEVEETLYWYLSELGLPHVERQILAGRLVLRGYLSGETPEGVMERWREHIRERLTQKAEIGWYAVERRDWQAAWREQWRPIFVGERLVIWPVWLPDPPGDRLVIPLDPGMAFGTGEHATTRLCLRALESVPDLGTFADVGCGSGVLTVAALKLGAGRGWAVDTDDLAVVSTRKNLEISGLEERVTVARGSTEQLSGPLDGVVSNILAEVIANLAPEFRRLVHPGGWGIFSGLLLTQAPRVVEALAGQGFALSETLSEGDWACLVGRFSADRPRSAGS</sequence>
<name>PRMA_GLOVI</name>
<dbReference type="EC" id="2.1.1.-" evidence="1"/>
<dbReference type="EMBL" id="BA000045">
    <property type="protein sequence ID" value="BAC90077.1"/>
    <property type="molecule type" value="Genomic_DNA"/>
</dbReference>
<dbReference type="RefSeq" id="NP_925082.1">
    <property type="nucleotide sequence ID" value="NC_005125.1"/>
</dbReference>
<dbReference type="SMR" id="Q7NIP7"/>
<dbReference type="STRING" id="251221.gene:10759631"/>
<dbReference type="EnsemblBacteria" id="BAC90077">
    <property type="protein sequence ID" value="BAC90077"/>
    <property type="gene ID" value="BAC90077"/>
</dbReference>
<dbReference type="KEGG" id="gvi:glr2136"/>
<dbReference type="PATRIC" id="fig|251221.4.peg.2170"/>
<dbReference type="eggNOG" id="COG2264">
    <property type="taxonomic scope" value="Bacteria"/>
</dbReference>
<dbReference type="HOGENOM" id="CLU_049382_0_1_3"/>
<dbReference type="InParanoid" id="Q7NIP7"/>
<dbReference type="OrthoDB" id="9785995at2"/>
<dbReference type="PhylomeDB" id="Q7NIP7"/>
<dbReference type="Proteomes" id="UP000000557">
    <property type="component" value="Chromosome"/>
</dbReference>
<dbReference type="GO" id="GO:0005737">
    <property type="term" value="C:cytoplasm"/>
    <property type="evidence" value="ECO:0007669"/>
    <property type="project" value="UniProtKB-SubCell"/>
</dbReference>
<dbReference type="GO" id="GO:0008276">
    <property type="term" value="F:protein methyltransferase activity"/>
    <property type="evidence" value="ECO:0000318"/>
    <property type="project" value="GO_Central"/>
</dbReference>
<dbReference type="GO" id="GO:0016279">
    <property type="term" value="F:protein-lysine N-methyltransferase activity"/>
    <property type="evidence" value="ECO:0007669"/>
    <property type="project" value="RHEA"/>
</dbReference>
<dbReference type="GO" id="GO:0032259">
    <property type="term" value="P:methylation"/>
    <property type="evidence" value="ECO:0007669"/>
    <property type="project" value="UniProtKB-KW"/>
</dbReference>
<dbReference type="CDD" id="cd02440">
    <property type="entry name" value="AdoMet_MTases"/>
    <property type="match status" value="1"/>
</dbReference>
<dbReference type="Gene3D" id="3.40.50.150">
    <property type="entry name" value="Vaccinia Virus protein VP39"/>
    <property type="match status" value="1"/>
</dbReference>
<dbReference type="HAMAP" id="MF_00735">
    <property type="entry name" value="Methyltr_PrmA"/>
    <property type="match status" value="1"/>
</dbReference>
<dbReference type="InterPro" id="IPR050078">
    <property type="entry name" value="Ribosomal_L11_MeTrfase_PrmA"/>
</dbReference>
<dbReference type="InterPro" id="IPR004498">
    <property type="entry name" value="Ribosomal_PrmA_MeTrfase"/>
</dbReference>
<dbReference type="InterPro" id="IPR029063">
    <property type="entry name" value="SAM-dependent_MTases_sf"/>
</dbReference>
<dbReference type="NCBIfam" id="TIGR00406">
    <property type="entry name" value="prmA"/>
    <property type="match status" value="1"/>
</dbReference>
<dbReference type="PANTHER" id="PTHR43648">
    <property type="entry name" value="ELECTRON TRANSFER FLAVOPROTEIN BETA SUBUNIT LYSINE METHYLTRANSFERASE"/>
    <property type="match status" value="1"/>
</dbReference>
<dbReference type="PANTHER" id="PTHR43648:SF1">
    <property type="entry name" value="ELECTRON TRANSFER FLAVOPROTEIN BETA SUBUNIT LYSINE METHYLTRANSFERASE"/>
    <property type="match status" value="1"/>
</dbReference>
<dbReference type="Pfam" id="PF06325">
    <property type="entry name" value="PrmA"/>
    <property type="match status" value="1"/>
</dbReference>
<dbReference type="SUPFAM" id="SSF53335">
    <property type="entry name" value="S-adenosyl-L-methionine-dependent methyltransferases"/>
    <property type="match status" value="1"/>
</dbReference>
<gene>
    <name evidence="1" type="primary">prmA</name>
    <name type="ordered locus">glr2136</name>
</gene>
<reference key="1">
    <citation type="journal article" date="2003" name="DNA Res.">
        <title>Complete genome structure of Gloeobacter violaceus PCC 7421, a cyanobacterium that lacks thylakoids.</title>
        <authorList>
            <person name="Nakamura Y."/>
            <person name="Kaneko T."/>
            <person name="Sato S."/>
            <person name="Mimuro M."/>
            <person name="Miyashita H."/>
            <person name="Tsuchiya T."/>
            <person name="Sasamoto S."/>
            <person name="Watanabe A."/>
            <person name="Kawashima K."/>
            <person name="Kishida Y."/>
            <person name="Kiyokawa C."/>
            <person name="Kohara M."/>
            <person name="Matsumoto M."/>
            <person name="Matsuno A."/>
            <person name="Nakazaki N."/>
            <person name="Shimpo S."/>
            <person name="Takeuchi C."/>
            <person name="Yamada M."/>
            <person name="Tabata S."/>
        </authorList>
    </citation>
    <scope>NUCLEOTIDE SEQUENCE [LARGE SCALE GENOMIC DNA]</scope>
    <source>
        <strain>ATCC 29082 / PCC 7421</strain>
    </source>
</reference>